<organism>
    <name type="scientific">Homo sapiens</name>
    <name type="common">Human</name>
    <dbReference type="NCBI Taxonomy" id="9606"/>
    <lineage>
        <taxon>Eukaryota</taxon>
        <taxon>Metazoa</taxon>
        <taxon>Chordata</taxon>
        <taxon>Craniata</taxon>
        <taxon>Vertebrata</taxon>
        <taxon>Euteleostomi</taxon>
        <taxon>Mammalia</taxon>
        <taxon>Eutheria</taxon>
        <taxon>Euarchontoglires</taxon>
        <taxon>Primates</taxon>
        <taxon>Haplorrhini</taxon>
        <taxon>Catarrhini</taxon>
        <taxon>Hominidae</taxon>
        <taxon>Homo</taxon>
    </lineage>
</organism>
<dbReference type="EMBL" id="AL353898">
    <property type="status" value="NOT_ANNOTATED_CDS"/>
    <property type="molecule type" value="Genomic_DNA"/>
</dbReference>
<dbReference type="EMBL" id="BC103740">
    <property type="status" value="NOT_ANNOTATED_CDS"/>
    <property type="molecule type" value="mRNA"/>
</dbReference>
<dbReference type="EMBL" id="BC127708">
    <property type="protein sequence ID" value="AAI27709.1"/>
    <property type="molecule type" value="mRNA"/>
</dbReference>
<dbReference type="EMBL" id="BC127709">
    <property type="protein sequence ID" value="AAI27710.1"/>
    <property type="molecule type" value="mRNA"/>
</dbReference>
<dbReference type="EMBL" id="BC140760">
    <property type="protein sequence ID" value="AAI40761.1"/>
    <property type="molecule type" value="mRNA"/>
</dbReference>
<dbReference type="EMBL" id="BC144466">
    <property type="protein sequence ID" value="AAI44467.1"/>
    <property type="molecule type" value="mRNA"/>
</dbReference>
<dbReference type="CCDS" id="CCDS30725.1">
    <molecule id="Q5T700-1"/>
</dbReference>
<dbReference type="CCDS" id="CCDS60145.1">
    <molecule id="Q5T700-3"/>
</dbReference>
<dbReference type="CCDS" id="CCDS60146.1">
    <molecule id="Q5T700-4"/>
</dbReference>
<dbReference type="CCDS" id="CCDS60147.1">
    <molecule id="Q5T700-2"/>
</dbReference>
<dbReference type="RefSeq" id="NP_001010978.2">
    <molecule id="Q5T700-1"/>
    <property type="nucleotide sequence ID" value="NM_001010978.4"/>
</dbReference>
<dbReference type="RefSeq" id="NP_001263321.1">
    <molecule id="Q5T700-2"/>
    <property type="nucleotide sequence ID" value="NM_001276392.2"/>
</dbReference>
<dbReference type="RefSeq" id="NP_001263322.1">
    <molecule id="Q5T700-4"/>
    <property type="nucleotide sequence ID" value="NM_001276393.2"/>
</dbReference>
<dbReference type="RefSeq" id="NP_001263323.1">
    <molecule id="Q5T700-3"/>
    <property type="nucleotide sequence ID" value="NM_001276394.2"/>
</dbReference>
<dbReference type="SMR" id="Q5T700"/>
<dbReference type="BioGRID" id="132783">
    <property type="interactions" value="209"/>
</dbReference>
<dbReference type="FunCoup" id="Q5T700">
    <property type="interactions" value="42"/>
</dbReference>
<dbReference type="IntAct" id="Q5T700">
    <property type="interactions" value="198"/>
</dbReference>
<dbReference type="STRING" id="9606.ENSP00000360411"/>
<dbReference type="PhosphoSitePlus" id="Q5T700"/>
<dbReference type="BioMuta" id="LDLRAD1"/>
<dbReference type="DMDM" id="74745299"/>
<dbReference type="MassIVE" id="Q5T700"/>
<dbReference type="PaxDb" id="9606-ENSP00000360411"/>
<dbReference type="PeptideAtlas" id="Q5T700"/>
<dbReference type="Antibodypedia" id="46892">
    <property type="antibodies" value="99 antibodies from 23 providers"/>
</dbReference>
<dbReference type="DNASU" id="388633"/>
<dbReference type="Ensembl" id="ENST00000371360.2">
    <molecule id="Q5T700-1"/>
    <property type="protein sequence ID" value="ENSP00000360411.1"/>
    <property type="gene ID" value="ENSG00000203985.11"/>
</dbReference>
<dbReference type="Ensembl" id="ENST00000371362.7">
    <molecule id="Q5T700-3"/>
    <property type="protein sequence ID" value="ENSP00000360413.3"/>
    <property type="gene ID" value="ENSG00000203985.11"/>
</dbReference>
<dbReference type="Ensembl" id="ENST00000420619.5">
    <molecule id="Q5T700-2"/>
    <property type="protein sequence ID" value="ENSP00000411017.1"/>
    <property type="gene ID" value="ENSG00000203985.11"/>
</dbReference>
<dbReference type="Ensembl" id="ENST00000545928.5">
    <molecule id="Q5T700-4"/>
    <property type="protein sequence ID" value="ENSP00000445871.1"/>
    <property type="gene ID" value="ENSG00000203985.11"/>
</dbReference>
<dbReference type="GeneID" id="388633"/>
<dbReference type="KEGG" id="hsa:388633"/>
<dbReference type="MANE-Select" id="ENST00000371360.2">
    <property type="protein sequence ID" value="ENSP00000360411.1"/>
    <property type="RefSeq nucleotide sequence ID" value="NM_001010978.4"/>
    <property type="RefSeq protein sequence ID" value="NP_001010978.2"/>
</dbReference>
<dbReference type="UCSC" id="uc001cwm.3">
    <molecule id="Q5T700-1"/>
    <property type="organism name" value="human"/>
</dbReference>
<dbReference type="AGR" id="HGNC:32069"/>
<dbReference type="CTD" id="388633"/>
<dbReference type="DisGeNET" id="388633"/>
<dbReference type="GeneCards" id="LDLRAD1"/>
<dbReference type="HGNC" id="HGNC:32069">
    <property type="gene designation" value="LDLRAD1"/>
</dbReference>
<dbReference type="HPA" id="ENSG00000203985">
    <property type="expression patterns" value="Tissue enriched (fallopian)"/>
</dbReference>
<dbReference type="neXtProt" id="NX_Q5T700"/>
<dbReference type="OpenTargets" id="ENSG00000203985"/>
<dbReference type="PharmGKB" id="PA142671554"/>
<dbReference type="VEuPathDB" id="HostDB:ENSG00000203985"/>
<dbReference type="eggNOG" id="ENOG502S044">
    <property type="taxonomic scope" value="Eukaryota"/>
</dbReference>
<dbReference type="GeneTree" id="ENSGT00390000008557"/>
<dbReference type="HOGENOM" id="CLU_115457_0_0_1"/>
<dbReference type="InParanoid" id="Q5T700"/>
<dbReference type="OMA" id="MCRDMPQ"/>
<dbReference type="OrthoDB" id="2019384at2759"/>
<dbReference type="PAN-GO" id="Q5T700">
    <property type="GO annotations" value="0 GO annotations based on evolutionary models"/>
</dbReference>
<dbReference type="PhylomeDB" id="Q5T700"/>
<dbReference type="TreeFam" id="TF343451"/>
<dbReference type="PathwayCommons" id="Q5T700"/>
<dbReference type="SignaLink" id="Q5T700"/>
<dbReference type="BioGRID-ORCS" id="388633">
    <property type="hits" value="11 hits in 1138 CRISPR screens"/>
</dbReference>
<dbReference type="GenomeRNAi" id="388633"/>
<dbReference type="Pharos" id="Q5T700">
    <property type="development level" value="Tdark"/>
</dbReference>
<dbReference type="PRO" id="PR:Q5T700"/>
<dbReference type="Proteomes" id="UP000005640">
    <property type="component" value="Chromosome 1"/>
</dbReference>
<dbReference type="RNAct" id="Q5T700">
    <property type="molecule type" value="protein"/>
</dbReference>
<dbReference type="Bgee" id="ENSG00000203985">
    <property type="expression patterns" value="Expressed in right uterine tube and 38 other cell types or tissues"/>
</dbReference>
<dbReference type="GO" id="GO:0016020">
    <property type="term" value="C:membrane"/>
    <property type="evidence" value="ECO:0007669"/>
    <property type="project" value="UniProtKB-SubCell"/>
</dbReference>
<dbReference type="GO" id="GO:0016192">
    <property type="term" value="P:vesicle-mediated transport"/>
    <property type="evidence" value="ECO:0007669"/>
    <property type="project" value="UniProtKB-ARBA"/>
</dbReference>
<dbReference type="Gene3D" id="4.10.400.10">
    <property type="entry name" value="Low-density Lipoprotein Receptor"/>
    <property type="match status" value="2"/>
</dbReference>
<dbReference type="InterPro" id="IPR036055">
    <property type="entry name" value="LDL_receptor-like_sf"/>
</dbReference>
<dbReference type="InterPro" id="IPR050685">
    <property type="entry name" value="LDLR"/>
</dbReference>
<dbReference type="InterPro" id="IPR002172">
    <property type="entry name" value="LDrepeatLR_classA_rpt"/>
</dbReference>
<dbReference type="PANTHER" id="PTHR24270">
    <property type="entry name" value="LOW-DENSITY LIPOPROTEIN RECEPTOR-RELATED"/>
    <property type="match status" value="1"/>
</dbReference>
<dbReference type="Pfam" id="PF00057">
    <property type="entry name" value="Ldl_recept_a"/>
    <property type="match status" value="1"/>
</dbReference>
<dbReference type="Pfam" id="PF25241">
    <property type="entry name" value="LDLRAD1_C"/>
    <property type="match status" value="1"/>
</dbReference>
<dbReference type="PRINTS" id="PR00261">
    <property type="entry name" value="LDLRECEPTOR"/>
</dbReference>
<dbReference type="SMART" id="SM00192">
    <property type="entry name" value="LDLa"/>
    <property type="match status" value="3"/>
</dbReference>
<dbReference type="SUPFAM" id="SSF57424">
    <property type="entry name" value="LDL receptor-like module"/>
    <property type="match status" value="2"/>
</dbReference>
<dbReference type="PROSITE" id="PS01209">
    <property type="entry name" value="LDLRA_1"/>
    <property type="match status" value="1"/>
</dbReference>
<dbReference type="PROSITE" id="PS50068">
    <property type="entry name" value="LDLRA_2"/>
    <property type="match status" value="1"/>
</dbReference>
<proteinExistence type="evidence at protein level"/>
<comment type="interaction">
    <interactant intactId="EBI-10173166">
        <id>Q5T700</id>
    </interactant>
    <interactant intactId="EBI-10290200">
        <id>Q96K78</id>
        <label>ADGRG7</label>
    </interactant>
    <organismsDiffer>false</organismsDiffer>
    <experiments>7</experiments>
</comment>
<comment type="interaction">
    <interactant intactId="EBI-10173166">
        <id>Q5T700</id>
    </interactant>
    <interactant intactId="EBI-12109402">
        <id>Q86W74-2</id>
        <label>ANKRD46</label>
    </interactant>
    <organismsDiffer>false</organismsDiffer>
    <experiments>3</experiments>
</comment>
<comment type="interaction">
    <interactant intactId="EBI-10173166">
        <id>Q5T700</id>
    </interactant>
    <interactant intactId="EBI-745213">
        <id>P29972</id>
        <label>AQP1</label>
    </interactant>
    <organismsDiffer>false</organismsDiffer>
    <experiments>3</experiments>
</comment>
<comment type="interaction">
    <interactant intactId="EBI-10173166">
        <id>Q5T700</id>
    </interactant>
    <interactant intactId="EBI-752094">
        <id>Q12982</id>
        <label>BNIP2</label>
    </interactant>
    <organismsDiffer>false</organismsDiffer>
    <experiments>3</experiments>
</comment>
<comment type="interaction">
    <interactant intactId="EBI-10173166">
        <id>Q5T700</id>
    </interactant>
    <interactant intactId="EBI-749464">
        <id>Q12983</id>
        <label>BNIP3</label>
    </interactant>
    <organismsDiffer>false</organismsDiffer>
    <experiments>6</experiments>
</comment>
<comment type="interaction">
    <interactant intactId="EBI-10173166">
        <id>Q5T700</id>
    </interactant>
    <interactant intactId="EBI-849893">
        <id>O60238</id>
        <label>BNIP3L</label>
    </interactant>
    <organismsDiffer>false</organismsDiffer>
    <experiments>4</experiments>
</comment>
<comment type="interaction">
    <interactant intactId="EBI-10173166">
        <id>Q5T700</id>
    </interactant>
    <interactant intactId="EBI-2807956">
        <id>Q96FZ5</id>
        <label>CMTM7</label>
    </interactant>
    <organismsDiffer>false</organismsDiffer>
    <experiments>3</experiments>
</comment>
<comment type="interaction">
    <interactant intactId="EBI-10173166">
        <id>Q5T700</id>
    </interactant>
    <interactant intactId="EBI-12019274">
        <id>Q4LDR2</id>
        <label>CTXN3</label>
    </interactant>
    <organismsDiffer>false</organismsDiffer>
    <experiments>3</experiments>
</comment>
<comment type="interaction">
    <interactant intactId="EBI-10173166">
        <id>Q5T700</id>
    </interactant>
    <interactant intactId="EBI-3911467">
        <id>Q07325</id>
        <label>CXCL9</label>
    </interactant>
    <organismsDiffer>false</organismsDiffer>
    <experiments>3</experiments>
</comment>
<comment type="interaction">
    <interactant intactId="EBI-10173166">
        <id>Q5T700</id>
    </interactant>
    <interactant intactId="EBI-3915253">
        <id>Q15125</id>
        <label>EBP</label>
    </interactant>
    <organismsDiffer>false</organismsDiffer>
    <experiments>3</experiments>
</comment>
<comment type="interaction">
    <interactant intactId="EBI-10173166">
        <id>Q5T700</id>
    </interactant>
    <interactant intactId="EBI-3907816">
        <id>P54852</id>
        <label>EMP3</label>
    </interactant>
    <organismsDiffer>false</organismsDiffer>
    <experiments>3</experiments>
</comment>
<comment type="interaction">
    <interactant intactId="EBI-10173166">
        <id>Q5T700</id>
    </interactant>
    <interactant intactId="EBI-6166686">
        <id>Q96F15</id>
        <label>GIMAP5</label>
    </interactant>
    <organismsDiffer>false</organismsDiffer>
    <experiments>6</experiments>
</comment>
<comment type="interaction">
    <interactant intactId="EBI-10173166">
        <id>Q5T700</id>
    </interactant>
    <interactant intactId="EBI-10178951">
        <id>O00155</id>
        <label>GPR25</label>
    </interactant>
    <organismsDiffer>false</organismsDiffer>
    <experiments>3</experiments>
</comment>
<comment type="interaction">
    <interactant intactId="EBI-10173166">
        <id>Q5T700</id>
    </interactant>
    <interactant intactId="EBI-720480">
        <id>P24593</id>
        <label>IGFBP5</label>
    </interactant>
    <organismsDiffer>false</organismsDiffer>
    <experiments>3</experiments>
</comment>
<comment type="interaction">
    <interactant intactId="EBI-10173166">
        <id>Q5T700</id>
    </interactant>
    <interactant intactId="EBI-2865663">
        <id>Q13571</id>
        <label>LAPTM5</label>
    </interactant>
    <organismsDiffer>false</organismsDiffer>
    <experiments>3</experiments>
</comment>
<comment type="interaction">
    <interactant intactId="EBI-10173166">
        <id>Q5T700</id>
    </interactant>
    <interactant intactId="EBI-3932027">
        <id>P21145</id>
        <label>MAL</label>
    </interactant>
    <organismsDiffer>false</organismsDiffer>
    <experiments>7</experiments>
</comment>
<comment type="interaction">
    <interactant intactId="EBI-10173166">
        <id>Q5T700</id>
    </interactant>
    <interactant intactId="EBI-750078">
        <id>Q13021</id>
        <label>MALL</label>
    </interactant>
    <organismsDiffer>false</organismsDiffer>
    <experiments>7</experiments>
</comment>
<comment type="interaction">
    <interactant intactId="EBI-10173166">
        <id>Q5T700</id>
    </interactant>
    <interactant intactId="EBI-10317612">
        <id>Q9P0N8</id>
        <label>MARCHF2</label>
    </interactant>
    <organismsDiffer>false</organismsDiffer>
    <experiments>7</experiments>
</comment>
<comment type="interaction">
    <interactant intactId="EBI-10173166">
        <id>Q5T700</id>
    </interactant>
    <interactant intactId="EBI-10317425">
        <id>Q9NZG7</id>
        <label>NINJ2</label>
    </interactant>
    <organismsDiffer>false</organismsDiffer>
    <experiments>3</experiments>
</comment>
<comment type="interaction">
    <interactant intactId="EBI-10173166">
        <id>Q5T700</id>
    </interactant>
    <interactant intactId="EBI-2804156">
        <id>Q6UX06</id>
        <label>OLFM4</label>
    </interactant>
    <organismsDiffer>false</organismsDiffer>
    <experiments>7</experiments>
</comment>
<comment type="interaction">
    <interactant intactId="EBI-10173166">
        <id>Q5T700</id>
    </interactant>
    <interactant intactId="EBI-692836">
        <id>P26678</id>
        <label>PLN</label>
    </interactant>
    <organismsDiffer>false</organismsDiffer>
    <experiments>4</experiments>
</comment>
<comment type="interaction">
    <interactant intactId="EBI-10173166">
        <id>Q5T700</id>
    </interactant>
    <interactant intactId="EBI-11721828">
        <id>Q8IY26</id>
        <label>PLPP6</label>
    </interactant>
    <organismsDiffer>false</organismsDiffer>
    <experiments>3</experiments>
</comment>
<comment type="interaction">
    <interactant intactId="EBI-10173166">
        <id>Q5T700</id>
    </interactant>
    <interactant intactId="EBI-3906138">
        <id>P53801</id>
        <label>PTTG1IP</label>
    </interactant>
    <organismsDiffer>false</organismsDiffer>
    <experiments>3</experiments>
</comment>
<comment type="interaction">
    <interactant intactId="EBI-10173166">
        <id>Q5T700</id>
    </interactant>
    <interactant intactId="EBI-8652744">
        <id>Q96IW7</id>
        <label>SEC22A</label>
    </interactant>
    <organismsDiffer>false</organismsDiffer>
    <experiments>3</experiments>
</comment>
<comment type="interaction">
    <interactant intactId="EBI-10173166">
        <id>Q5T700</id>
    </interactant>
    <interactant intactId="EBI-745376">
        <id>P43005</id>
        <label>SLC1A1</label>
    </interactant>
    <organismsDiffer>false</organismsDiffer>
    <experiments>4</experiments>
</comment>
<comment type="interaction">
    <interactant intactId="EBI-10173166">
        <id>Q5T700</id>
    </interactant>
    <interactant intactId="EBI-10290130">
        <id>Q96JW4</id>
        <label>SLC41A2</label>
    </interactant>
    <organismsDiffer>false</organismsDiffer>
    <experiments>3</experiments>
</comment>
<comment type="interaction">
    <interactant intactId="EBI-10173166">
        <id>Q5T700</id>
    </interactant>
    <interactant intactId="EBI-348587">
        <id>Q9BVK8</id>
        <label>TMEM147</label>
    </interactant>
    <organismsDiffer>false</organismsDiffer>
    <experiments>7</experiments>
</comment>
<comment type="interaction">
    <interactant intactId="EBI-10173166">
        <id>Q5T700</id>
    </interactant>
    <interactant intactId="EBI-10278423">
        <id>Q8WZ59</id>
        <label>TMEM190</label>
    </interactant>
    <organismsDiffer>false</organismsDiffer>
    <experiments>7</experiments>
</comment>
<comment type="interaction">
    <interactant intactId="EBI-10173166">
        <id>Q5T700</id>
    </interactant>
    <interactant intactId="EBI-10173151">
        <id>A2RU14</id>
        <label>TMEM218</label>
    </interactant>
    <organismsDiffer>false</organismsDiffer>
    <experiments>8</experiments>
</comment>
<comment type="interaction">
    <interactant intactId="EBI-10173166">
        <id>Q5T700</id>
    </interactant>
    <interactant intactId="EBI-8649725">
        <id>Q9BSE2</id>
        <label>TMEM79</label>
    </interactant>
    <organismsDiffer>false</organismsDiffer>
    <experiments>3</experiments>
</comment>
<comment type="interaction">
    <interactant intactId="EBI-10173166">
        <id>Q5T700</id>
    </interactant>
    <interactant intactId="EBI-4401271">
        <id>Q9H1C4</id>
        <label>UNC93B1</label>
    </interactant>
    <organismsDiffer>false</organismsDiffer>
    <experiments>3</experiments>
</comment>
<comment type="interaction">
    <interactant intactId="EBI-10173166">
        <id>Q5T700</id>
    </interactant>
    <interactant intactId="EBI-744953">
        <id>O75379</id>
        <label>VAMP4</label>
    </interactant>
    <organismsDiffer>false</organismsDiffer>
    <experiments>3</experiments>
</comment>
<comment type="interaction">
    <interactant intactId="EBI-10173166">
        <id>Q5T700</id>
    </interactant>
    <interactant intactId="EBI-723716">
        <id>Q9UEU0</id>
        <label>VTI1B</label>
    </interactant>
    <organismsDiffer>false</organismsDiffer>
    <experiments>8</experiments>
</comment>
<comment type="interaction">
    <interactant intactId="EBI-10173166">
        <id>Q5T700</id>
    </interactant>
    <interactant intactId="EBI-718439">
        <id>O95159</id>
        <label>ZFPL1</label>
    </interactant>
    <organismsDiffer>false</organismsDiffer>
    <experiments>3</experiments>
</comment>
<comment type="subcellular location">
    <subcellularLocation>
        <location evidence="4">Membrane</location>
        <topology evidence="4">Single-pass membrane protein</topology>
    </subcellularLocation>
</comment>
<comment type="alternative products">
    <event type="alternative splicing"/>
    <isoform>
        <id>Q5T700-1</id>
        <name>1</name>
        <sequence type="displayed"/>
    </isoform>
    <isoform>
        <id>Q5T700-2</id>
        <name>2</name>
        <sequence type="described" ref="VSP_027617"/>
    </isoform>
    <isoform>
        <id>Q5T700-3</id>
        <name>3</name>
        <sequence type="described" ref="VSP_027618"/>
    </isoform>
    <isoform>
        <id>Q5T700-4</id>
        <name>4</name>
        <sequence type="described" ref="VSP_054532"/>
    </isoform>
</comment>
<comment type="similarity">
    <text evidence="4">Belongs to the LDLR family.</text>
</comment>
<protein>
    <recommendedName>
        <fullName>Low-density lipoprotein receptor class A domain-containing protein 1</fullName>
    </recommendedName>
</protein>
<gene>
    <name type="primary">LDLRAD1</name>
</gene>
<evidence type="ECO:0000255" key="1"/>
<evidence type="ECO:0000255" key="2">
    <source>
        <dbReference type="PROSITE-ProRule" id="PRU00124"/>
    </source>
</evidence>
<evidence type="ECO:0000303" key="3">
    <source>
    </source>
</evidence>
<evidence type="ECO:0000305" key="4"/>
<sequence length="205" mass="21834">MNKVFPQGENGYTAAESKAHPGGEAGGGHLCCSRRGACLSASLLLLLATVAALIALVTILGLPSCTPGAQACITLTNRTGFLCHDQRSCIPASGVCDGVRTCTHGEDEDESLCRDVPQSLPHFLVAHCGDPASWIYSDQKCDGTNNCGDCSDELSPVTVCPPCGPGWWRCPSTFFKYCDCIPRHLCRDHVQHCSDWSDEYACPGP</sequence>
<name>LRAD1_HUMAN</name>
<keyword id="KW-0025">Alternative splicing</keyword>
<keyword id="KW-1015">Disulfide bond</keyword>
<keyword id="KW-0449">Lipoprotein</keyword>
<keyword id="KW-0472">Membrane</keyword>
<keyword id="KW-1267">Proteomics identification</keyword>
<keyword id="KW-0675">Receptor</keyword>
<keyword id="KW-1185">Reference proteome</keyword>
<keyword id="KW-0677">Repeat</keyword>
<keyword id="KW-0812">Transmembrane</keyword>
<keyword id="KW-1133">Transmembrane helix</keyword>
<feature type="chain" id="PRO_0000299376" description="Low-density lipoprotein receptor class A domain-containing protein 1">
    <location>
        <begin position="1"/>
        <end position="205"/>
    </location>
</feature>
<feature type="transmembrane region" description="Helical" evidence="1">
    <location>
        <begin position="43"/>
        <end position="63"/>
    </location>
</feature>
<feature type="domain" description="LDL-receptor class A 1" evidence="2">
    <location>
        <begin position="71"/>
        <end position="114"/>
    </location>
</feature>
<feature type="domain" description="LDL-receptor class A 2; atypical" evidence="2">
    <location>
        <begin position="115"/>
        <end position="161"/>
    </location>
</feature>
<feature type="domain" description="LDL-receptor class A 3; atypical" evidence="2">
    <location>
        <begin position="162"/>
        <end position="203"/>
    </location>
</feature>
<feature type="disulfide bond" evidence="2">
    <location>
        <begin position="72"/>
        <end position="89"/>
    </location>
</feature>
<feature type="disulfide bond" evidence="2">
    <location>
        <begin position="83"/>
        <end position="102"/>
    </location>
</feature>
<feature type="disulfide bond" evidence="2">
    <location>
        <begin position="96"/>
        <end position="113"/>
    </location>
</feature>
<feature type="disulfide bond" evidence="2">
    <location>
        <begin position="141"/>
        <end position="160"/>
    </location>
</feature>
<feature type="disulfide bond" evidence="2">
    <location>
        <begin position="163"/>
        <end position="180"/>
    </location>
</feature>
<feature type="disulfide bond" evidence="2">
    <location>
        <begin position="170"/>
        <end position="193"/>
    </location>
</feature>
<feature type="splice variant" id="VSP_027617" description="In isoform 2." evidence="3">
    <original>MNKVFPQGENGYTAAESKAHPGGEAGGGHLCCSRRGACLSASLLLLLATVAALIALVTILGLPSCT</original>
    <variation>MQGTRAELSAHSPSRAAGNRRHEQGLP</variation>
    <location>
        <begin position="1"/>
        <end position="66"/>
    </location>
</feature>
<feature type="splice variant" id="VSP_027618" description="In isoform 3." evidence="3">
    <original>AGGGHLCCSRRGACLSASLLLLLATVAALIALVTILGLPSCTPGAQACITLTNRTGFLCHDQRSCIPASGVCDGVRTCTHGEDEDESLCR</original>
    <variation>G</variation>
    <location>
        <begin position="25"/>
        <end position="114"/>
    </location>
</feature>
<feature type="splice variant" id="VSP_054532" description="In isoform 4." evidence="3">
    <location>
        <begin position="25"/>
        <end position="67"/>
    </location>
</feature>
<accession>Q5T700</accession>
<accession>A0PJY0</accession>
<accession>B7ZME3</accession>
<accession>Q5T6Z9</accession>
<reference key="1">
    <citation type="journal article" date="2006" name="Nature">
        <title>The DNA sequence and biological annotation of human chromosome 1.</title>
        <authorList>
            <person name="Gregory S.G."/>
            <person name="Barlow K.F."/>
            <person name="McLay K.E."/>
            <person name="Kaul R."/>
            <person name="Swarbreck D."/>
            <person name="Dunham A."/>
            <person name="Scott C.E."/>
            <person name="Howe K.L."/>
            <person name="Woodfine K."/>
            <person name="Spencer C.C.A."/>
            <person name="Jones M.C."/>
            <person name="Gillson C."/>
            <person name="Searle S."/>
            <person name="Zhou Y."/>
            <person name="Kokocinski F."/>
            <person name="McDonald L."/>
            <person name="Evans R."/>
            <person name="Phillips K."/>
            <person name="Atkinson A."/>
            <person name="Cooper R."/>
            <person name="Jones C."/>
            <person name="Hall R.E."/>
            <person name="Andrews T.D."/>
            <person name="Lloyd C."/>
            <person name="Ainscough R."/>
            <person name="Almeida J.P."/>
            <person name="Ambrose K.D."/>
            <person name="Anderson F."/>
            <person name="Andrew R.W."/>
            <person name="Ashwell R.I.S."/>
            <person name="Aubin K."/>
            <person name="Babbage A.K."/>
            <person name="Bagguley C.L."/>
            <person name="Bailey J."/>
            <person name="Beasley H."/>
            <person name="Bethel G."/>
            <person name="Bird C.P."/>
            <person name="Bray-Allen S."/>
            <person name="Brown J.Y."/>
            <person name="Brown A.J."/>
            <person name="Buckley D."/>
            <person name="Burton J."/>
            <person name="Bye J."/>
            <person name="Carder C."/>
            <person name="Chapman J.C."/>
            <person name="Clark S.Y."/>
            <person name="Clarke G."/>
            <person name="Clee C."/>
            <person name="Cobley V."/>
            <person name="Collier R.E."/>
            <person name="Corby N."/>
            <person name="Coville G.J."/>
            <person name="Davies J."/>
            <person name="Deadman R."/>
            <person name="Dunn M."/>
            <person name="Earthrowl M."/>
            <person name="Ellington A.G."/>
            <person name="Errington H."/>
            <person name="Frankish A."/>
            <person name="Frankland J."/>
            <person name="French L."/>
            <person name="Garner P."/>
            <person name="Garnett J."/>
            <person name="Gay L."/>
            <person name="Ghori M.R.J."/>
            <person name="Gibson R."/>
            <person name="Gilby L.M."/>
            <person name="Gillett W."/>
            <person name="Glithero R.J."/>
            <person name="Grafham D.V."/>
            <person name="Griffiths C."/>
            <person name="Griffiths-Jones S."/>
            <person name="Grocock R."/>
            <person name="Hammond S."/>
            <person name="Harrison E.S.I."/>
            <person name="Hart E."/>
            <person name="Haugen E."/>
            <person name="Heath P.D."/>
            <person name="Holmes S."/>
            <person name="Holt K."/>
            <person name="Howden P.J."/>
            <person name="Hunt A.R."/>
            <person name="Hunt S.E."/>
            <person name="Hunter G."/>
            <person name="Isherwood J."/>
            <person name="James R."/>
            <person name="Johnson C."/>
            <person name="Johnson D."/>
            <person name="Joy A."/>
            <person name="Kay M."/>
            <person name="Kershaw J.K."/>
            <person name="Kibukawa M."/>
            <person name="Kimberley A.M."/>
            <person name="King A."/>
            <person name="Knights A.J."/>
            <person name="Lad H."/>
            <person name="Laird G."/>
            <person name="Lawlor S."/>
            <person name="Leongamornlert D.A."/>
            <person name="Lloyd D.M."/>
            <person name="Loveland J."/>
            <person name="Lovell J."/>
            <person name="Lush M.J."/>
            <person name="Lyne R."/>
            <person name="Martin S."/>
            <person name="Mashreghi-Mohammadi M."/>
            <person name="Matthews L."/>
            <person name="Matthews N.S.W."/>
            <person name="McLaren S."/>
            <person name="Milne S."/>
            <person name="Mistry S."/>
            <person name="Moore M.J.F."/>
            <person name="Nickerson T."/>
            <person name="O'Dell C.N."/>
            <person name="Oliver K."/>
            <person name="Palmeiri A."/>
            <person name="Palmer S.A."/>
            <person name="Parker A."/>
            <person name="Patel D."/>
            <person name="Pearce A.V."/>
            <person name="Peck A.I."/>
            <person name="Pelan S."/>
            <person name="Phelps K."/>
            <person name="Phillimore B.J."/>
            <person name="Plumb R."/>
            <person name="Rajan J."/>
            <person name="Raymond C."/>
            <person name="Rouse G."/>
            <person name="Saenphimmachak C."/>
            <person name="Sehra H.K."/>
            <person name="Sheridan E."/>
            <person name="Shownkeen R."/>
            <person name="Sims S."/>
            <person name="Skuce C.D."/>
            <person name="Smith M."/>
            <person name="Steward C."/>
            <person name="Subramanian S."/>
            <person name="Sycamore N."/>
            <person name="Tracey A."/>
            <person name="Tromans A."/>
            <person name="Van Helmond Z."/>
            <person name="Wall M."/>
            <person name="Wallis J.M."/>
            <person name="White S."/>
            <person name="Whitehead S.L."/>
            <person name="Wilkinson J.E."/>
            <person name="Willey D.L."/>
            <person name="Williams H."/>
            <person name="Wilming L."/>
            <person name="Wray P.W."/>
            <person name="Wu Z."/>
            <person name="Coulson A."/>
            <person name="Vaudin M."/>
            <person name="Sulston J.E."/>
            <person name="Durbin R.M."/>
            <person name="Hubbard T."/>
            <person name="Wooster R."/>
            <person name="Dunham I."/>
            <person name="Carter N.P."/>
            <person name="McVean G."/>
            <person name="Ross M.T."/>
            <person name="Harrow J."/>
            <person name="Olson M.V."/>
            <person name="Beck S."/>
            <person name="Rogers J."/>
            <person name="Bentley D.R."/>
        </authorList>
    </citation>
    <scope>NUCLEOTIDE SEQUENCE [LARGE SCALE GENOMIC DNA]</scope>
</reference>
<reference key="2">
    <citation type="journal article" date="2004" name="Genome Res.">
        <title>The status, quality, and expansion of the NIH full-length cDNA project: the Mammalian Gene Collection (MGC).</title>
        <authorList>
            <consortium name="The MGC Project Team"/>
        </authorList>
    </citation>
    <scope>NUCLEOTIDE SEQUENCE [LARGE SCALE MRNA] (ISOFORMS 1; 2; 3 AND 4)</scope>
    <source>
        <tissue>Lung</tissue>
    </source>
</reference>